<feature type="propeptide" id="PRO_0000031329" evidence="1">
    <location>
        <begin position="1"/>
        <end position="2"/>
    </location>
</feature>
<feature type="chain" id="PRO_0000031330" description="Ribulose bisphosphate carboxylase large chain">
    <location>
        <begin position="3"/>
        <end position="477"/>
    </location>
</feature>
<feature type="active site" description="Proton acceptor" evidence="1">
    <location>
        <position position="175"/>
    </location>
</feature>
<feature type="active site" description="Proton acceptor" evidence="1">
    <location>
        <position position="294"/>
    </location>
</feature>
<feature type="binding site" description="in homodimeric partner" evidence="1">
    <location>
        <position position="123"/>
    </location>
    <ligand>
        <name>substrate</name>
    </ligand>
</feature>
<feature type="binding site" evidence="1">
    <location>
        <position position="173"/>
    </location>
    <ligand>
        <name>substrate</name>
    </ligand>
</feature>
<feature type="binding site" evidence="1">
    <location>
        <position position="177"/>
    </location>
    <ligand>
        <name>substrate</name>
    </ligand>
</feature>
<feature type="binding site" description="via carbamate group" evidence="1">
    <location>
        <position position="201"/>
    </location>
    <ligand>
        <name>Mg(2+)</name>
        <dbReference type="ChEBI" id="CHEBI:18420"/>
    </ligand>
</feature>
<feature type="binding site" evidence="1">
    <location>
        <position position="203"/>
    </location>
    <ligand>
        <name>Mg(2+)</name>
        <dbReference type="ChEBI" id="CHEBI:18420"/>
    </ligand>
</feature>
<feature type="binding site" evidence="1">
    <location>
        <position position="204"/>
    </location>
    <ligand>
        <name>Mg(2+)</name>
        <dbReference type="ChEBI" id="CHEBI:18420"/>
    </ligand>
</feature>
<feature type="binding site" evidence="1">
    <location>
        <position position="295"/>
    </location>
    <ligand>
        <name>substrate</name>
    </ligand>
</feature>
<feature type="binding site" evidence="1">
    <location>
        <position position="327"/>
    </location>
    <ligand>
        <name>substrate</name>
    </ligand>
</feature>
<feature type="binding site" evidence="1">
    <location>
        <position position="379"/>
    </location>
    <ligand>
        <name>substrate</name>
    </ligand>
</feature>
<feature type="site" description="Transition state stabilizer" evidence="1">
    <location>
        <position position="334"/>
    </location>
</feature>
<feature type="modified residue" description="N-acetylproline" evidence="1">
    <location>
        <position position="3"/>
    </location>
</feature>
<feature type="modified residue" description="N6-carboxylysine" evidence="1">
    <location>
        <position position="201"/>
    </location>
</feature>
<feature type="disulfide bond" description="Interchain; in linked form" evidence="1">
    <location>
        <position position="247"/>
    </location>
</feature>
<feature type="strand" evidence="4">
    <location>
        <begin position="36"/>
        <end position="44"/>
    </location>
</feature>
<feature type="helix" evidence="4">
    <location>
        <begin position="50"/>
        <end position="60"/>
    </location>
</feature>
<feature type="turn" evidence="4">
    <location>
        <begin position="61"/>
        <end position="63"/>
    </location>
</feature>
<feature type="helix" evidence="4">
    <location>
        <begin position="70"/>
        <end position="74"/>
    </location>
</feature>
<feature type="helix" evidence="4">
    <location>
        <begin position="77"/>
        <end position="80"/>
    </location>
</feature>
<feature type="strand" evidence="4">
    <location>
        <begin position="83"/>
        <end position="90"/>
    </location>
</feature>
<feature type="strand" evidence="4">
    <location>
        <begin position="93"/>
        <end position="103"/>
    </location>
</feature>
<feature type="helix" evidence="4">
    <location>
        <begin position="105"/>
        <end position="107"/>
    </location>
</feature>
<feature type="helix" evidence="4">
    <location>
        <begin position="113"/>
        <end position="121"/>
    </location>
</feature>
<feature type="helix" evidence="4">
    <location>
        <begin position="124"/>
        <end position="126"/>
    </location>
</feature>
<feature type="strand" evidence="4">
    <location>
        <begin position="130"/>
        <end position="139"/>
    </location>
</feature>
<feature type="helix" evidence="4">
    <location>
        <begin position="142"/>
        <end position="145"/>
    </location>
</feature>
<feature type="strand" evidence="3">
    <location>
        <begin position="151"/>
        <end position="153"/>
    </location>
</feature>
<feature type="helix" evidence="4">
    <location>
        <begin position="155"/>
        <end position="162"/>
    </location>
</feature>
<feature type="strand" evidence="4">
    <location>
        <begin position="169"/>
        <end position="173"/>
    </location>
</feature>
<feature type="strand" evidence="4">
    <location>
        <begin position="175"/>
        <end position="180"/>
    </location>
</feature>
<feature type="helix" evidence="4">
    <location>
        <begin position="182"/>
        <end position="194"/>
    </location>
</feature>
<feature type="strand" evidence="4">
    <location>
        <begin position="198"/>
        <end position="201"/>
    </location>
</feature>
<feature type="strand" evidence="4">
    <location>
        <begin position="207"/>
        <end position="209"/>
    </location>
</feature>
<feature type="helix" evidence="4">
    <location>
        <begin position="214"/>
        <end position="232"/>
    </location>
</feature>
<feature type="strand" evidence="4">
    <location>
        <begin position="237"/>
        <end position="241"/>
    </location>
</feature>
<feature type="helix" evidence="4">
    <location>
        <begin position="247"/>
        <end position="260"/>
    </location>
</feature>
<feature type="strand" evidence="4">
    <location>
        <begin position="263"/>
        <end position="268"/>
    </location>
</feature>
<feature type="helix" evidence="4">
    <location>
        <begin position="269"/>
        <end position="272"/>
    </location>
</feature>
<feature type="helix" evidence="4">
    <location>
        <begin position="274"/>
        <end position="287"/>
    </location>
</feature>
<feature type="strand" evidence="4">
    <location>
        <begin position="290"/>
        <end position="294"/>
    </location>
</feature>
<feature type="helix" evidence="4">
    <location>
        <begin position="298"/>
        <end position="302"/>
    </location>
</feature>
<feature type="strand" evidence="4">
    <location>
        <begin position="307"/>
        <end position="309"/>
    </location>
</feature>
<feature type="helix" evidence="4">
    <location>
        <begin position="311"/>
        <end position="321"/>
    </location>
</feature>
<feature type="strand" evidence="4">
    <location>
        <begin position="324"/>
        <end position="329"/>
    </location>
</feature>
<feature type="helix" evidence="4">
    <location>
        <begin position="336"/>
        <end position="350"/>
    </location>
</feature>
<feature type="strand" evidence="4">
    <location>
        <begin position="352"/>
        <end position="354"/>
    </location>
</feature>
<feature type="helix" evidence="4">
    <location>
        <begin position="358"/>
        <end position="360"/>
    </location>
</feature>
<feature type="strand" evidence="4">
    <location>
        <begin position="375"/>
        <end position="378"/>
    </location>
</feature>
<feature type="helix" evidence="4">
    <location>
        <begin position="384"/>
        <end position="386"/>
    </location>
</feature>
<feature type="helix" evidence="4">
    <location>
        <begin position="387"/>
        <end position="394"/>
    </location>
</feature>
<feature type="strand" evidence="4">
    <location>
        <begin position="399"/>
        <end position="401"/>
    </location>
</feature>
<feature type="helix" evidence="4">
    <location>
        <begin position="404"/>
        <end position="407"/>
    </location>
</feature>
<feature type="helix" evidence="4">
    <location>
        <begin position="413"/>
        <end position="432"/>
    </location>
</feature>
<feature type="helix" evidence="4">
    <location>
        <begin position="437"/>
        <end position="449"/>
    </location>
</feature>
<feature type="helix" evidence="4">
    <location>
        <begin position="453"/>
        <end position="461"/>
    </location>
</feature>
<evidence type="ECO:0000250" key="1"/>
<evidence type="ECO:0000305" key="2"/>
<evidence type="ECO:0007829" key="3">
    <source>
        <dbReference type="PDB" id="6KYI"/>
    </source>
</evidence>
<evidence type="ECO:0007829" key="4">
    <source>
        <dbReference type="PDB" id="6KYJ"/>
    </source>
</evidence>
<protein>
    <recommendedName>
        <fullName>Ribulose bisphosphate carboxylase large chain</fullName>
        <shortName>RuBisCO large subunit</shortName>
        <ecNumber>4.1.1.39</ecNumber>
    </recommendedName>
</protein>
<dbReference type="EC" id="4.1.1.39"/>
<dbReference type="EMBL" id="AY522331">
    <property type="protein sequence ID" value="AAS46190.1"/>
    <property type="status" value="ALT_INIT"/>
    <property type="molecule type" value="Genomic_DNA"/>
</dbReference>
<dbReference type="RefSeq" id="YP_009305312.1">
    <property type="nucleotide sequence ID" value="NC_031333.1"/>
</dbReference>
<dbReference type="PDB" id="6KYI">
    <property type="method" value="X-ray"/>
    <property type="resolution" value="1.75 A"/>
    <property type="chains" value="A/B=1-477"/>
</dbReference>
<dbReference type="PDB" id="6KYJ">
    <property type="method" value="X-ray"/>
    <property type="resolution" value="1.70 A"/>
    <property type="chains" value="A/C/E/G=1-477"/>
</dbReference>
<dbReference type="PDBsum" id="6KYI"/>
<dbReference type="PDBsum" id="6KYJ"/>
<dbReference type="SMR" id="P0C510"/>
<dbReference type="IntAct" id="P0C510">
    <property type="interactions" value="1"/>
</dbReference>
<dbReference type="GeneID" id="29141378"/>
<dbReference type="ExpressionAtlas" id="P0C510">
    <property type="expression patterns" value="baseline and differential"/>
</dbReference>
<dbReference type="GO" id="GO:0009507">
    <property type="term" value="C:chloroplast"/>
    <property type="evidence" value="ECO:0007669"/>
    <property type="project" value="UniProtKB-SubCell"/>
</dbReference>
<dbReference type="GO" id="GO:0009536">
    <property type="term" value="C:plastid"/>
    <property type="evidence" value="ECO:0000305"/>
    <property type="project" value="Gramene"/>
</dbReference>
<dbReference type="GO" id="GO:0000287">
    <property type="term" value="F:magnesium ion binding"/>
    <property type="evidence" value="ECO:0007669"/>
    <property type="project" value="UniProtKB-UniRule"/>
</dbReference>
<dbReference type="GO" id="GO:0004497">
    <property type="term" value="F:monooxygenase activity"/>
    <property type="evidence" value="ECO:0007669"/>
    <property type="project" value="UniProtKB-KW"/>
</dbReference>
<dbReference type="GO" id="GO:0016984">
    <property type="term" value="F:ribulose-bisphosphate carboxylase activity"/>
    <property type="evidence" value="ECO:0007669"/>
    <property type="project" value="UniProtKB-UniRule"/>
</dbReference>
<dbReference type="GO" id="GO:0009853">
    <property type="term" value="P:photorespiration"/>
    <property type="evidence" value="ECO:0007669"/>
    <property type="project" value="UniProtKB-KW"/>
</dbReference>
<dbReference type="GO" id="GO:0019253">
    <property type="term" value="P:reductive pentose-phosphate cycle"/>
    <property type="evidence" value="ECO:0007669"/>
    <property type="project" value="UniProtKB-UniRule"/>
</dbReference>
<dbReference type="CDD" id="cd08212">
    <property type="entry name" value="RuBisCO_large_I"/>
    <property type="match status" value="1"/>
</dbReference>
<dbReference type="FunFam" id="3.20.20.110:FF:000001">
    <property type="entry name" value="Ribulose bisphosphate carboxylase large chain"/>
    <property type="match status" value="1"/>
</dbReference>
<dbReference type="FunFam" id="3.30.70.150:FF:000001">
    <property type="entry name" value="Ribulose bisphosphate carboxylase large chain"/>
    <property type="match status" value="1"/>
</dbReference>
<dbReference type="Gene3D" id="3.20.20.110">
    <property type="entry name" value="Ribulose bisphosphate carboxylase, large subunit, C-terminal domain"/>
    <property type="match status" value="1"/>
</dbReference>
<dbReference type="Gene3D" id="3.30.70.150">
    <property type="entry name" value="RuBisCO large subunit, N-terminal domain"/>
    <property type="match status" value="1"/>
</dbReference>
<dbReference type="HAMAP" id="MF_01338">
    <property type="entry name" value="RuBisCO_L_type1"/>
    <property type="match status" value="1"/>
</dbReference>
<dbReference type="InterPro" id="IPR033966">
    <property type="entry name" value="RuBisCO"/>
</dbReference>
<dbReference type="InterPro" id="IPR020878">
    <property type="entry name" value="RuBisCo_large_chain_AS"/>
</dbReference>
<dbReference type="InterPro" id="IPR000685">
    <property type="entry name" value="RuBisCO_lsu_C"/>
</dbReference>
<dbReference type="InterPro" id="IPR036376">
    <property type="entry name" value="RuBisCO_lsu_C_sf"/>
</dbReference>
<dbReference type="InterPro" id="IPR017443">
    <property type="entry name" value="RuBisCO_lsu_fd_N"/>
</dbReference>
<dbReference type="InterPro" id="IPR036422">
    <property type="entry name" value="RuBisCO_lsu_N_sf"/>
</dbReference>
<dbReference type="InterPro" id="IPR020888">
    <property type="entry name" value="RuBisCO_lsuI"/>
</dbReference>
<dbReference type="NCBIfam" id="NF003252">
    <property type="entry name" value="PRK04208.1"/>
    <property type="match status" value="1"/>
</dbReference>
<dbReference type="PANTHER" id="PTHR42704">
    <property type="entry name" value="RIBULOSE BISPHOSPHATE CARBOXYLASE"/>
    <property type="match status" value="1"/>
</dbReference>
<dbReference type="PANTHER" id="PTHR42704:SF20">
    <property type="entry name" value="RIBULOSE BISPHOSPHATE CARBOXYLASE LARGE CHAIN"/>
    <property type="match status" value="1"/>
</dbReference>
<dbReference type="Pfam" id="PF00016">
    <property type="entry name" value="RuBisCO_large"/>
    <property type="match status" value="1"/>
</dbReference>
<dbReference type="Pfam" id="PF02788">
    <property type="entry name" value="RuBisCO_large_N"/>
    <property type="match status" value="1"/>
</dbReference>
<dbReference type="SFLD" id="SFLDG01052">
    <property type="entry name" value="RuBisCO"/>
    <property type="match status" value="1"/>
</dbReference>
<dbReference type="SFLD" id="SFLDS00014">
    <property type="entry name" value="RuBisCO"/>
    <property type="match status" value="1"/>
</dbReference>
<dbReference type="SFLD" id="SFLDG00301">
    <property type="entry name" value="RuBisCO-like_proteins"/>
    <property type="match status" value="1"/>
</dbReference>
<dbReference type="SUPFAM" id="SSF51649">
    <property type="entry name" value="RuBisCo, C-terminal domain"/>
    <property type="match status" value="1"/>
</dbReference>
<dbReference type="SUPFAM" id="SSF54966">
    <property type="entry name" value="RuBisCO, large subunit, small (N-terminal) domain"/>
    <property type="match status" value="1"/>
</dbReference>
<dbReference type="PROSITE" id="PS00157">
    <property type="entry name" value="RUBISCO_LARGE"/>
    <property type="match status" value="1"/>
</dbReference>
<geneLocation type="chloroplast"/>
<proteinExistence type="evidence at protein level"/>
<comment type="function">
    <text evidence="1">RuBisCO catalyzes two reactions: the carboxylation of D-ribulose 1,5-bisphosphate, the primary event in carbon dioxide fixation, as well as the oxidative fragmentation of the pentose substrate in the photorespiration process. Both reactions occur simultaneously and in competition at the same active site (By similarity).</text>
</comment>
<comment type="catalytic activity">
    <reaction>
        <text>2 (2R)-3-phosphoglycerate + 2 H(+) = D-ribulose 1,5-bisphosphate + CO2 + H2O</text>
        <dbReference type="Rhea" id="RHEA:23124"/>
        <dbReference type="ChEBI" id="CHEBI:15377"/>
        <dbReference type="ChEBI" id="CHEBI:15378"/>
        <dbReference type="ChEBI" id="CHEBI:16526"/>
        <dbReference type="ChEBI" id="CHEBI:57870"/>
        <dbReference type="ChEBI" id="CHEBI:58272"/>
        <dbReference type="EC" id="4.1.1.39"/>
    </reaction>
</comment>
<comment type="catalytic activity">
    <reaction>
        <text>D-ribulose 1,5-bisphosphate + O2 = 2-phosphoglycolate + (2R)-3-phosphoglycerate + 2 H(+)</text>
        <dbReference type="Rhea" id="RHEA:36631"/>
        <dbReference type="ChEBI" id="CHEBI:15378"/>
        <dbReference type="ChEBI" id="CHEBI:15379"/>
        <dbReference type="ChEBI" id="CHEBI:57870"/>
        <dbReference type="ChEBI" id="CHEBI:58033"/>
        <dbReference type="ChEBI" id="CHEBI:58272"/>
    </reaction>
</comment>
<comment type="cofactor">
    <cofactor evidence="1">
        <name>Mg(2+)</name>
        <dbReference type="ChEBI" id="CHEBI:18420"/>
    </cofactor>
    <text evidence="1">Binds 1 Mg(2+) ion per subunit.</text>
</comment>
<comment type="subunit">
    <text evidence="1">Heterohexadecamer of 8 large chains and 8 small chains; disulfide-linked. The disulfide link is formed within the large subunit homodimers (By similarity).</text>
</comment>
<comment type="subcellular location">
    <subcellularLocation>
        <location>Plastid</location>
        <location>Chloroplast</location>
    </subcellularLocation>
</comment>
<comment type="PTM">
    <text evidence="1">The disulfide bond which can form in the large chain dimeric partners within the hexadecamer appears to be associated with oxidative stress and protein turnover.</text>
</comment>
<comment type="miscellaneous">
    <text evidence="1">The basic functional RuBisCO is composed of a large chain homodimer in a 'head-to-tail' conformation. In form I RuBisCO this homodimer is arranged in a barrel-like tetramer with the small subunits forming a tetrameric 'cap' on each end of the 'barrel' (By similarity).</text>
</comment>
<comment type="similarity">
    <text evidence="2">Belongs to the RuBisCO large chain family. Type I subfamily.</text>
</comment>
<comment type="sequence caution" evidence="2">
    <conflict type="erroneous initiation">
        <sequence resource="EMBL-CDS" id="AAS46190"/>
    </conflict>
</comment>
<organism>
    <name type="scientific">Oryza sativa</name>
    <name type="common">Rice</name>
    <dbReference type="NCBI Taxonomy" id="4530"/>
    <lineage>
        <taxon>Eukaryota</taxon>
        <taxon>Viridiplantae</taxon>
        <taxon>Streptophyta</taxon>
        <taxon>Embryophyta</taxon>
        <taxon>Tracheophyta</taxon>
        <taxon>Spermatophyta</taxon>
        <taxon>Magnoliopsida</taxon>
        <taxon>Liliopsida</taxon>
        <taxon>Poales</taxon>
        <taxon>Poaceae</taxon>
        <taxon>BOP clade</taxon>
        <taxon>Oryzoideae</taxon>
        <taxon>Oryzeae</taxon>
        <taxon>Oryzinae</taxon>
        <taxon>Oryza</taxon>
    </lineage>
</organism>
<accession>P0C510</accession>
<accession>P12089</accession>
<accession>Q6QY04</accession>
<accession>Q6QY68</accession>
<sequence>MSPQTETKASVGFKAGVKDYKLTYYTPEYETKDTDILAAFRVTPQPGVPPEEAGAAVAAESSTGTWTTVWTDGLTSLDRYKGRCYHIEPVVGEDNQYIAYVAYPLDLFEEGSVTNMFTSIVGNVFGFKALRALRLEDLRIPPTYSKTFQGPPHGIQVERDKLNKYGRPLLGCTIKPKLGLSAKNYGRACYECLRGGLDFTKDDENVNSQPFMRWRDRFVFCAEAIYKSQAETGEIKGHYLNATAGTCEEMIKRAVFARELGVPIVMHDYLTGGFTANTSLAHYCRDNGLLLHIHRAMHAVIDRQKNHGMHFRVLAKALRMSGGDHIHAGTVVGKLEGEREMTLGFVDLLRDDFIEKDRARGIFFTQDWVSMPGVIPVASGGIHVWHMPALTEIFGDDSVLQFGGGTLGHPWGNAPGAAANRVALEACVQARNEGRDLAREGNEIIRSACKWSPELAAACEIWKAIKFEFEPVDKLDS</sequence>
<gene>
    <name type="primary">rbcL</name>
    <name type="ORF">PA064</name>
</gene>
<keyword id="KW-0002">3D-structure</keyword>
<keyword id="KW-0007">Acetylation</keyword>
<keyword id="KW-0113">Calvin cycle</keyword>
<keyword id="KW-0120">Carbon dioxide fixation</keyword>
<keyword id="KW-0150">Chloroplast</keyword>
<keyword id="KW-1015">Disulfide bond</keyword>
<keyword id="KW-0456">Lyase</keyword>
<keyword id="KW-0460">Magnesium</keyword>
<keyword id="KW-0479">Metal-binding</keyword>
<keyword id="KW-0503">Monooxygenase</keyword>
<keyword id="KW-0560">Oxidoreductase</keyword>
<keyword id="KW-0601">Photorespiration</keyword>
<keyword id="KW-0602">Photosynthesis</keyword>
<keyword id="KW-0934">Plastid</keyword>
<reference key="1">
    <citation type="journal article" date="2004" name="Plant Physiol.">
        <title>A comparison of rice chloroplast genomes.</title>
        <authorList>
            <person name="Tang J."/>
            <person name="Xia H."/>
            <person name="Cao M."/>
            <person name="Zhang X."/>
            <person name="Zeng W."/>
            <person name="Hu S."/>
            <person name="Tong W."/>
            <person name="Wang J."/>
            <person name="Wang J."/>
            <person name="Yu J."/>
            <person name="Yang H."/>
            <person name="Zhu L."/>
        </authorList>
    </citation>
    <scope>NUCLEOTIDE SEQUENCE [LARGE SCALE GENOMIC DNA]</scope>
    <source>
        <strain>cv. PA64s</strain>
    </source>
</reference>
<name>RBL_ORYSA</name>